<gene>
    <name type="primary">adaA</name>
    <name type="ordered locus">BSU01810</name>
</gene>
<dbReference type="EC" id="2.1.1.n11"/>
<dbReference type="EMBL" id="X53399">
    <property type="protein sequence ID" value="CAA37475.1"/>
    <property type="molecule type" value="Genomic_DNA"/>
</dbReference>
<dbReference type="EMBL" id="AB006424">
    <property type="protein sequence ID" value="BAA33074.1"/>
    <property type="molecule type" value="Genomic_DNA"/>
</dbReference>
<dbReference type="EMBL" id="AL009126">
    <property type="protein sequence ID" value="CAB11957.1"/>
    <property type="molecule type" value="Genomic_DNA"/>
</dbReference>
<dbReference type="PIR" id="S11483">
    <property type="entry name" value="XUBSMM"/>
</dbReference>
<dbReference type="RefSeq" id="NP_388062.1">
    <property type="nucleotide sequence ID" value="NC_000964.3"/>
</dbReference>
<dbReference type="RefSeq" id="WP_003234924.1">
    <property type="nucleotide sequence ID" value="NZ_OZ025638.1"/>
</dbReference>
<dbReference type="SMR" id="P19219"/>
<dbReference type="FunCoup" id="P19219">
    <property type="interactions" value="44"/>
</dbReference>
<dbReference type="STRING" id="224308.BSU01810"/>
<dbReference type="PaxDb" id="224308-BSU01810"/>
<dbReference type="EnsemblBacteria" id="CAB11957">
    <property type="protein sequence ID" value="CAB11957"/>
    <property type="gene ID" value="BSU_01810"/>
</dbReference>
<dbReference type="GeneID" id="938648"/>
<dbReference type="KEGG" id="bsu:BSU01810"/>
<dbReference type="PATRIC" id="fig|224308.179.peg.187"/>
<dbReference type="eggNOG" id="COG2169">
    <property type="taxonomic scope" value="Bacteria"/>
</dbReference>
<dbReference type="InParanoid" id="P19219"/>
<dbReference type="OrthoDB" id="9802228at2"/>
<dbReference type="PhylomeDB" id="P19219"/>
<dbReference type="BioCyc" id="BSUB:BSU01810-MONOMER"/>
<dbReference type="Proteomes" id="UP000001570">
    <property type="component" value="Chromosome"/>
</dbReference>
<dbReference type="GO" id="GO:0003700">
    <property type="term" value="F:DNA-binding transcription factor activity"/>
    <property type="evidence" value="ECO:0007669"/>
    <property type="project" value="InterPro"/>
</dbReference>
<dbReference type="GO" id="GO:0008168">
    <property type="term" value="F:methyltransferase activity"/>
    <property type="evidence" value="ECO:0007669"/>
    <property type="project" value="UniProtKB-KW"/>
</dbReference>
<dbReference type="GO" id="GO:0043565">
    <property type="term" value="F:sequence-specific DNA binding"/>
    <property type="evidence" value="ECO:0007669"/>
    <property type="project" value="InterPro"/>
</dbReference>
<dbReference type="GO" id="GO:0008270">
    <property type="term" value="F:zinc ion binding"/>
    <property type="evidence" value="ECO:0007669"/>
    <property type="project" value="InterPro"/>
</dbReference>
<dbReference type="GO" id="GO:0006281">
    <property type="term" value="P:DNA repair"/>
    <property type="evidence" value="ECO:0007669"/>
    <property type="project" value="UniProtKB-KW"/>
</dbReference>
<dbReference type="GO" id="GO:0032259">
    <property type="term" value="P:methylation"/>
    <property type="evidence" value="ECO:0007669"/>
    <property type="project" value="UniProtKB-KW"/>
</dbReference>
<dbReference type="Gene3D" id="3.40.10.10">
    <property type="entry name" value="DNA Methylphosphotriester Repair Domain"/>
    <property type="match status" value="1"/>
</dbReference>
<dbReference type="Gene3D" id="1.10.10.60">
    <property type="entry name" value="Homeodomain-like"/>
    <property type="match status" value="2"/>
</dbReference>
<dbReference type="InterPro" id="IPR035451">
    <property type="entry name" value="Ada-like_dom_sf"/>
</dbReference>
<dbReference type="InterPro" id="IPR004026">
    <property type="entry name" value="Ada_DNA_repair_Zn-bd"/>
</dbReference>
<dbReference type="InterPro" id="IPR009057">
    <property type="entry name" value="Homeodomain-like_sf"/>
</dbReference>
<dbReference type="InterPro" id="IPR018060">
    <property type="entry name" value="HTH_AraC"/>
</dbReference>
<dbReference type="InterPro" id="IPR018062">
    <property type="entry name" value="HTH_AraC-typ_CS"/>
</dbReference>
<dbReference type="InterPro" id="IPR016220">
    <property type="entry name" value="Me-P-triester_DNA_alkyl-Trfase"/>
</dbReference>
<dbReference type="PANTHER" id="PTHR43280">
    <property type="entry name" value="ARAC-FAMILY TRANSCRIPTIONAL REGULATOR"/>
    <property type="match status" value="1"/>
</dbReference>
<dbReference type="PANTHER" id="PTHR43280:SF28">
    <property type="entry name" value="HTH-TYPE TRANSCRIPTIONAL ACTIVATOR RHAS"/>
    <property type="match status" value="1"/>
</dbReference>
<dbReference type="Pfam" id="PF02805">
    <property type="entry name" value="Ada_Zn_binding"/>
    <property type="match status" value="1"/>
</dbReference>
<dbReference type="Pfam" id="PF12833">
    <property type="entry name" value="HTH_18"/>
    <property type="match status" value="1"/>
</dbReference>
<dbReference type="PIRSF" id="PIRSF000408">
    <property type="entry name" value="Alkyltransferas_AdaA"/>
    <property type="match status" value="1"/>
</dbReference>
<dbReference type="SMART" id="SM00342">
    <property type="entry name" value="HTH_ARAC"/>
    <property type="match status" value="1"/>
</dbReference>
<dbReference type="SUPFAM" id="SSF57884">
    <property type="entry name" value="Ada DNA repair protein, N-terminal domain (N-Ada 10)"/>
    <property type="match status" value="1"/>
</dbReference>
<dbReference type="SUPFAM" id="SSF46689">
    <property type="entry name" value="Homeodomain-like"/>
    <property type="match status" value="2"/>
</dbReference>
<dbReference type="PROSITE" id="PS00041">
    <property type="entry name" value="HTH_ARAC_FAMILY_1"/>
    <property type="match status" value="1"/>
</dbReference>
<dbReference type="PROSITE" id="PS01124">
    <property type="entry name" value="HTH_ARAC_FAMILY_2"/>
    <property type="match status" value="1"/>
</dbReference>
<comment type="function">
    <text>Is involved in the adaptive response to alkylation damage in DNA caused by alkylating agents. Repairs the methylphosphotriester lesions in DNA by a direct and irreversible transfer of the methyl group to one of its own cysteine residues.</text>
</comment>
<comment type="function">
    <text>The methylation of AdaA by methylphosphotriesters in DNA leads to its activation as a transcriptional regulator that activates the transcription of the ada operon which consists of adaA and adaB, and of the adjacent gene alkA.</text>
</comment>
<comment type="catalytic activity">
    <reaction evidence="5">
        <text>(2'-deoxyribonucleoside 5'-methylphosphotriester)-DNA + L-cysteinyl-[protein] = 2'-deoxyribonucleotide-DNA + S-methyl-L-cysteinyl-[protein] + H(+)</text>
        <dbReference type="Rhea" id="RHEA:56324"/>
        <dbReference type="Rhea" id="RHEA-COMP:10131"/>
        <dbReference type="Rhea" id="RHEA-COMP:10132"/>
        <dbReference type="Rhea" id="RHEA-COMP:14462"/>
        <dbReference type="Rhea" id="RHEA-COMP:14463"/>
        <dbReference type="ChEBI" id="CHEBI:15378"/>
        <dbReference type="ChEBI" id="CHEBI:29950"/>
        <dbReference type="ChEBI" id="CHEBI:82612"/>
        <dbReference type="ChEBI" id="CHEBI:140284"/>
        <dbReference type="ChEBI" id="CHEBI:140286"/>
        <dbReference type="EC" id="2.1.1.n11"/>
    </reaction>
</comment>
<comment type="cofactor">
    <cofactor evidence="1">
        <name>Zn(2+)</name>
        <dbReference type="ChEBI" id="CHEBI:29105"/>
    </cofactor>
    <text evidence="1">Binds 1 zinc ion per subunit.</text>
</comment>
<comment type="induction">
    <text evidence="4">Up-regulated by methylated AdaA itself in response to the exposure to alkylating agents such as MNNG.</text>
</comment>
<feature type="chain" id="PRO_0000194494" description="Bifunctional transcriptional activator/DNA repair enzyme AdaA">
    <location>
        <begin position="1"/>
        <end position="211"/>
    </location>
</feature>
<feature type="domain" description="HTH araC/xylS-type" evidence="2">
    <location>
        <begin position="102"/>
        <end position="200"/>
    </location>
</feature>
<feature type="DNA-binding region" description="H-T-H motif" evidence="2">
    <location>
        <begin position="119"/>
        <end position="140"/>
    </location>
</feature>
<feature type="active site" description="Nucleophile; methyl group acceptor from methylphosphotriester" evidence="1">
    <location>
        <position position="54"/>
    </location>
</feature>
<feature type="binding site" evidence="1">
    <location>
        <position position="54"/>
    </location>
    <ligand>
        <name>Zn(2+)</name>
        <dbReference type="ChEBI" id="CHEBI:29105"/>
    </ligand>
</feature>
<feature type="binding site" evidence="1">
    <location>
        <position position="58"/>
    </location>
    <ligand>
        <name>Zn(2+)</name>
        <dbReference type="ChEBI" id="CHEBI:29105"/>
    </ligand>
</feature>
<feature type="binding site" evidence="1">
    <location>
        <position position="85"/>
    </location>
    <ligand>
        <name>Zn(2+)</name>
        <dbReference type="ChEBI" id="CHEBI:29105"/>
    </ligand>
</feature>
<feature type="binding site" evidence="1">
    <location>
        <position position="88"/>
    </location>
    <ligand>
        <name>Zn(2+)</name>
        <dbReference type="ChEBI" id="CHEBI:29105"/>
    </ligand>
</feature>
<feature type="mutagenesis site" description="Loss of activity." evidence="3">
    <original>KR</original>
    <variation>NC</variation>
    <location>
        <begin position="86"/>
        <end position="87"/>
    </location>
</feature>
<evidence type="ECO:0000250" key="1"/>
<evidence type="ECO:0000255" key="2">
    <source>
        <dbReference type="PROSITE-ProRule" id="PRU00593"/>
    </source>
</evidence>
<evidence type="ECO:0000269" key="3">
    <source>
    </source>
</evidence>
<evidence type="ECO:0000269" key="4">
    <source>
    </source>
</evidence>
<evidence type="ECO:0000269" key="5">
    <source>
    </source>
</evidence>
<protein>
    <recommendedName>
        <fullName>Bifunctional transcriptional activator/DNA repair enzyme AdaA</fullName>
    </recommendedName>
    <alternativeName>
        <fullName>Methylphosphotriester-DNA methyltransferase</fullName>
    </alternativeName>
    <alternativeName>
        <fullName>Methylphosphotriester-DNA--protein-cysteine S-methyltransferase</fullName>
        <ecNumber>2.1.1.n11</ecNumber>
    </alternativeName>
</protein>
<proteinExistence type="evidence at protein level"/>
<reference key="1">
    <citation type="journal article" date="1990" name="Nucleic Acids Res.">
        <title>Bacillus subtilis ada operon encodes two DNA alkyltransferases.</title>
        <authorList>
            <person name="Morohoshi F."/>
            <person name="Hayashi K."/>
            <person name="Munakata N."/>
        </authorList>
    </citation>
    <scope>NUCLEOTIDE SEQUENCE [GENOMIC DNA]</scope>
    <scope>FUNCTION AS A TRANSCRIPTIONAL ACTIVATOR</scope>
    <scope>ROLE IN RESISTANCE TO ALKYLATION DAMAGE</scope>
    <scope>INDUCTION</scope>
    <source>
        <strain>168</strain>
    </source>
</reference>
<reference key="2">
    <citation type="submission" date="1997-07" db="EMBL/GenBank/DDBJ databases">
        <title>Sequence analysis of the 70kb region between 17 and 23 degree of the Bacillus subtilis chromosome.</title>
        <authorList>
            <person name="Haga K."/>
            <person name="Liu H."/>
            <person name="Yasumoto K."/>
            <person name="Takahashi H."/>
            <person name="Yoshikawa H."/>
        </authorList>
    </citation>
    <scope>NUCLEOTIDE SEQUENCE [GENOMIC DNA]</scope>
    <source>
        <strain>168</strain>
    </source>
</reference>
<reference key="3">
    <citation type="journal article" date="1997" name="Nature">
        <title>The complete genome sequence of the Gram-positive bacterium Bacillus subtilis.</title>
        <authorList>
            <person name="Kunst F."/>
            <person name="Ogasawara N."/>
            <person name="Moszer I."/>
            <person name="Albertini A.M."/>
            <person name="Alloni G."/>
            <person name="Azevedo V."/>
            <person name="Bertero M.G."/>
            <person name="Bessieres P."/>
            <person name="Bolotin A."/>
            <person name="Borchert S."/>
            <person name="Borriss R."/>
            <person name="Boursier L."/>
            <person name="Brans A."/>
            <person name="Braun M."/>
            <person name="Brignell S.C."/>
            <person name="Bron S."/>
            <person name="Brouillet S."/>
            <person name="Bruschi C.V."/>
            <person name="Caldwell B."/>
            <person name="Capuano V."/>
            <person name="Carter N.M."/>
            <person name="Choi S.-K."/>
            <person name="Codani J.-J."/>
            <person name="Connerton I.F."/>
            <person name="Cummings N.J."/>
            <person name="Daniel R.A."/>
            <person name="Denizot F."/>
            <person name="Devine K.M."/>
            <person name="Duesterhoeft A."/>
            <person name="Ehrlich S.D."/>
            <person name="Emmerson P.T."/>
            <person name="Entian K.-D."/>
            <person name="Errington J."/>
            <person name="Fabret C."/>
            <person name="Ferrari E."/>
            <person name="Foulger D."/>
            <person name="Fritz C."/>
            <person name="Fujita M."/>
            <person name="Fujita Y."/>
            <person name="Fuma S."/>
            <person name="Galizzi A."/>
            <person name="Galleron N."/>
            <person name="Ghim S.-Y."/>
            <person name="Glaser P."/>
            <person name="Goffeau A."/>
            <person name="Golightly E.J."/>
            <person name="Grandi G."/>
            <person name="Guiseppi G."/>
            <person name="Guy B.J."/>
            <person name="Haga K."/>
            <person name="Haiech J."/>
            <person name="Harwood C.R."/>
            <person name="Henaut A."/>
            <person name="Hilbert H."/>
            <person name="Holsappel S."/>
            <person name="Hosono S."/>
            <person name="Hullo M.-F."/>
            <person name="Itaya M."/>
            <person name="Jones L.-M."/>
            <person name="Joris B."/>
            <person name="Karamata D."/>
            <person name="Kasahara Y."/>
            <person name="Klaerr-Blanchard M."/>
            <person name="Klein C."/>
            <person name="Kobayashi Y."/>
            <person name="Koetter P."/>
            <person name="Koningstein G."/>
            <person name="Krogh S."/>
            <person name="Kumano M."/>
            <person name="Kurita K."/>
            <person name="Lapidus A."/>
            <person name="Lardinois S."/>
            <person name="Lauber J."/>
            <person name="Lazarevic V."/>
            <person name="Lee S.-M."/>
            <person name="Levine A."/>
            <person name="Liu H."/>
            <person name="Masuda S."/>
            <person name="Mauel C."/>
            <person name="Medigue C."/>
            <person name="Medina N."/>
            <person name="Mellado R.P."/>
            <person name="Mizuno M."/>
            <person name="Moestl D."/>
            <person name="Nakai S."/>
            <person name="Noback M."/>
            <person name="Noone D."/>
            <person name="O'Reilly M."/>
            <person name="Ogawa K."/>
            <person name="Ogiwara A."/>
            <person name="Oudega B."/>
            <person name="Park S.-H."/>
            <person name="Parro V."/>
            <person name="Pohl T.M."/>
            <person name="Portetelle D."/>
            <person name="Porwollik S."/>
            <person name="Prescott A.M."/>
            <person name="Presecan E."/>
            <person name="Pujic P."/>
            <person name="Purnelle B."/>
            <person name="Rapoport G."/>
            <person name="Rey M."/>
            <person name="Reynolds S."/>
            <person name="Rieger M."/>
            <person name="Rivolta C."/>
            <person name="Rocha E."/>
            <person name="Roche B."/>
            <person name="Rose M."/>
            <person name="Sadaie Y."/>
            <person name="Sato T."/>
            <person name="Scanlan E."/>
            <person name="Schleich S."/>
            <person name="Schroeter R."/>
            <person name="Scoffone F."/>
            <person name="Sekiguchi J."/>
            <person name="Sekowska A."/>
            <person name="Seror S.J."/>
            <person name="Serror P."/>
            <person name="Shin B.-S."/>
            <person name="Soldo B."/>
            <person name="Sorokin A."/>
            <person name="Tacconi E."/>
            <person name="Takagi T."/>
            <person name="Takahashi H."/>
            <person name="Takemaru K."/>
            <person name="Takeuchi M."/>
            <person name="Tamakoshi A."/>
            <person name="Tanaka T."/>
            <person name="Terpstra P."/>
            <person name="Tognoni A."/>
            <person name="Tosato V."/>
            <person name="Uchiyama S."/>
            <person name="Vandenbol M."/>
            <person name="Vannier F."/>
            <person name="Vassarotti A."/>
            <person name="Viari A."/>
            <person name="Wambutt R."/>
            <person name="Wedler E."/>
            <person name="Wedler H."/>
            <person name="Weitzenegger T."/>
            <person name="Winters P."/>
            <person name="Wipat A."/>
            <person name="Yamamoto H."/>
            <person name="Yamane K."/>
            <person name="Yasumoto K."/>
            <person name="Yata K."/>
            <person name="Yoshida K."/>
            <person name="Yoshikawa H.-F."/>
            <person name="Zumstein E."/>
            <person name="Yoshikawa H."/>
            <person name="Danchin A."/>
        </authorList>
    </citation>
    <scope>NUCLEOTIDE SEQUENCE [LARGE SCALE GENOMIC DNA]</scope>
    <source>
        <strain>168</strain>
    </source>
</reference>
<reference key="4">
    <citation type="journal article" date="1987" name="J. Bacteriol.">
        <title>Multiple species of Bacillus subtilis DNA alkyltransferase involved in the adaptive response to simple alkylating agents.</title>
        <authorList>
            <person name="Morohoshi F."/>
            <person name="Munakata N."/>
        </authorList>
    </citation>
    <scope>CATALYTIC ACTIVITY</scope>
    <source>
        <strain>168</strain>
    </source>
</reference>
<reference key="5">
    <citation type="journal article" date="1991" name="J. Bacteriol.">
        <title>Molecular analysis of Bacillus subtilis ada mutants deficient in the adaptive response to simple alkylating agents.</title>
        <authorList>
            <person name="Morohoshi F."/>
            <person name="Hayashi K."/>
            <person name="Munakata N."/>
        </authorList>
    </citation>
    <scope>MUTAGENESIS</scope>
</reference>
<reference key="6">
    <citation type="journal article" date="1993" name="J. Bacteriol.">
        <title>Bacillus subtilis alkA gene encoding inducible 3-methyladenine DNA glycosylase is adjacent to the ada operon.</title>
        <authorList>
            <person name="Morohoshi F."/>
            <person name="Hayashi K."/>
            <person name="Munakata N."/>
        </authorList>
    </citation>
    <scope>FUNCTION</scope>
    <source>
        <strain>168</strain>
    </source>
</reference>
<keyword id="KW-0010">Activator</keyword>
<keyword id="KW-0227">DNA damage</keyword>
<keyword id="KW-0234">DNA repair</keyword>
<keyword id="KW-0238">DNA-binding</keyword>
<keyword id="KW-0479">Metal-binding</keyword>
<keyword id="KW-0489">Methyltransferase</keyword>
<keyword id="KW-1185">Reference proteome</keyword>
<keyword id="KW-0804">Transcription</keyword>
<keyword id="KW-0805">Transcription regulation</keyword>
<keyword id="KW-0808">Transferase</keyword>
<keyword id="KW-0862">Zinc</keyword>
<accession>P19219</accession>
<name>ADAA_BACSU</name>
<sequence>MPDSINNGHKESHDHRISNDAEMITDEKWQAIINNDAAYNNQFFYAVKSTGIFCKPSCKSRVPKKENVCIFPNTEQALRANFRPCKRCKPTNEKMPDSEWVDLITEYIDKNFTEKLTLESLADICHGSPYHMHRTFKKIKGITLVEYIQQVRVHAAKKYLIQTNKAIGDIAICVGIANAPYFITLFKKKTGQTPARFRQMSKMEETYNGNK</sequence>
<organism>
    <name type="scientific">Bacillus subtilis (strain 168)</name>
    <dbReference type="NCBI Taxonomy" id="224308"/>
    <lineage>
        <taxon>Bacteria</taxon>
        <taxon>Bacillati</taxon>
        <taxon>Bacillota</taxon>
        <taxon>Bacilli</taxon>
        <taxon>Bacillales</taxon>
        <taxon>Bacillaceae</taxon>
        <taxon>Bacillus</taxon>
    </lineage>
</organism>